<proteinExistence type="inferred from homology"/>
<comment type="function">
    <text evidence="1">Potential calcium sensor.</text>
</comment>
<comment type="similarity">
    <text evidence="3">Belongs to the calmodulin family.</text>
</comment>
<gene>
    <name type="primary">CML6</name>
    <name type="ordered locus">Os11g0586200</name>
    <name type="ordered locus">LOC_Os11g37550</name>
    <name type="ORF">OsJ_033072</name>
</gene>
<reference key="1">
    <citation type="journal article" date="2005" name="BMC Biol.">
        <title>The sequence of rice chromosomes 11 and 12, rich in disease resistance genes and recent gene duplications.</title>
        <authorList>
            <consortium name="The rice chromosomes 11 and 12 sequencing consortia"/>
        </authorList>
    </citation>
    <scope>NUCLEOTIDE SEQUENCE [LARGE SCALE GENOMIC DNA]</scope>
    <source>
        <strain>cv. Nipponbare</strain>
    </source>
</reference>
<reference key="2">
    <citation type="journal article" date="2005" name="Nature">
        <title>The map-based sequence of the rice genome.</title>
        <authorList>
            <consortium name="International rice genome sequencing project (IRGSP)"/>
        </authorList>
    </citation>
    <scope>NUCLEOTIDE SEQUENCE [LARGE SCALE GENOMIC DNA]</scope>
    <source>
        <strain>cv. Nipponbare</strain>
    </source>
</reference>
<reference key="3">
    <citation type="journal article" date="2008" name="Nucleic Acids Res.">
        <title>The rice annotation project database (RAP-DB): 2008 update.</title>
        <authorList>
            <consortium name="The rice annotation project (RAP)"/>
        </authorList>
    </citation>
    <scope>GENOME REANNOTATION</scope>
    <source>
        <strain>cv. Nipponbare</strain>
    </source>
</reference>
<reference key="4">
    <citation type="journal article" date="2013" name="Rice">
        <title>Improvement of the Oryza sativa Nipponbare reference genome using next generation sequence and optical map data.</title>
        <authorList>
            <person name="Kawahara Y."/>
            <person name="de la Bastide M."/>
            <person name="Hamilton J.P."/>
            <person name="Kanamori H."/>
            <person name="McCombie W.R."/>
            <person name="Ouyang S."/>
            <person name="Schwartz D.C."/>
            <person name="Tanaka T."/>
            <person name="Wu J."/>
            <person name="Zhou S."/>
            <person name="Childs K.L."/>
            <person name="Davidson R.M."/>
            <person name="Lin H."/>
            <person name="Quesada-Ocampo L."/>
            <person name="Vaillancourt B."/>
            <person name="Sakai H."/>
            <person name="Lee S.S."/>
            <person name="Kim J."/>
            <person name="Numa H."/>
            <person name="Itoh T."/>
            <person name="Buell C.R."/>
            <person name="Matsumoto T."/>
        </authorList>
    </citation>
    <scope>GENOME REANNOTATION</scope>
    <source>
        <strain>cv. Nipponbare</strain>
    </source>
</reference>
<reference key="5">
    <citation type="journal article" date="2005" name="PLoS Biol.">
        <title>The genomes of Oryza sativa: a history of duplications.</title>
        <authorList>
            <person name="Yu J."/>
            <person name="Wang J."/>
            <person name="Lin W."/>
            <person name="Li S."/>
            <person name="Li H."/>
            <person name="Zhou J."/>
            <person name="Ni P."/>
            <person name="Dong W."/>
            <person name="Hu S."/>
            <person name="Zeng C."/>
            <person name="Zhang J."/>
            <person name="Zhang Y."/>
            <person name="Li R."/>
            <person name="Xu Z."/>
            <person name="Li S."/>
            <person name="Li X."/>
            <person name="Zheng H."/>
            <person name="Cong L."/>
            <person name="Lin L."/>
            <person name="Yin J."/>
            <person name="Geng J."/>
            <person name="Li G."/>
            <person name="Shi J."/>
            <person name="Liu J."/>
            <person name="Lv H."/>
            <person name="Li J."/>
            <person name="Wang J."/>
            <person name="Deng Y."/>
            <person name="Ran L."/>
            <person name="Shi X."/>
            <person name="Wang X."/>
            <person name="Wu Q."/>
            <person name="Li C."/>
            <person name="Ren X."/>
            <person name="Wang J."/>
            <person name="Wang X."/>
            <person name="Li D."/>
            <person name="Liu D."/>
            <person name="Zhang X."/>
            <person name="Ji Z."/>
            <person name="Zhao W."/>
            <person name="Sun Y."/>
            <person name="Zhang Z."/>
            <person name="Bao J."/>
            <person name="Han Y."/>
            <person name="Dong L."/>
            <person name="Ji J."/>
            <person name="Chen P."/>
            <person name="Wu S."/>
            <person name="Liu J."/>
            <person name="Xiao Y."/>
            <person name="Bu D."/>
            <person name="Tan J."/>
            <person name="Yang L."/>
            <person name="Ye C."/>
            <person name="Zhang J."/>
            <person name="Xu J."/>
            <person name="Zhou Y."/>
            <person name="Yu Y."/>
            <person name="Zhang B."/>
            <person name="Zhuang S."/>
            <person name="Wei H."/>
            <person name="Liu B."/>
            <person name="Lei M."/>
            <person name="Yu H."/>
            <person name="Li Y."/>
            <person name="Xu H."/>
            <person name="Wei S."/>
            <person name="He X."/>
            <person name="Fang L."/>
            <person name="Zhang Z."/>
            <person name="Zhang Y."/>
            <person name="Huang X."/>
            <person name="Su Z."/>
            <person name="Tong W."/>
            <person name="Li J."/>
            <person name="Tong Z."/>
            <person name="Li S."/>
            <person name="Ye J."/>
            <person name="Wang L."/>
            <person name="Fang L."/>
            <person name="Lei T."/>
            <person name="Chen C.-S."/>
            <person name="Chen H.-C."/>
            <person name="Xu Z."/>
            <person name="Li H."/>
            <person name="Huang H."/>
            <person name="Zhang F."/>
            <person name="Xu H."/>
            <person name="Li N."/>
            <person name="Zhao C."/>
            <person name="Li S."/>
            <person name="Dong L."/>
            <person name="Huang Y."/>
            <person name="Li L."/>
            <person name="Xi Y."/>
            <person name="Qi Q."/>
            <person name="Li W."/>
            <person name="Zhang B."/>
            <person name="Hu W."/>
            <person name="Zhang Y."/>
            <person name="Tian X."/>
            <person name="Jiao Y."/>
            <person name="Liang X."/>
            <person name="Jin J."/>
            <person name="Gao L."/>
            <person name="Zheng W."/>
            <person name="Hao B."/>
            <person name="Liu S.-M."/>
            <person name="Wang W."/>
            <person name="Yuan L."/>
            <person name="Cao M."/>
            <person name="McDermott J."/>
            <person name="Samudrala R."/>
            <person name="Wang J."/>
            <person name="Wong G.K.-S."/>
            <person name="Yang H."/>
        </authorList>
    </citation>
    <scope>NUCLEOTIDE SEQUENCE [LARGE SCALE GENOMIC DNA]</scope>
    <source>
        <strain>cv. Nipponbare</strain>
    </source>
</reference>
<reference key="6">
    <citation type="journal article" date="2007" name="BMC Plant Biol.">
        <title>Genome-wide identification and analyses of the rice calmodulin and related potential calcium sensor proteins.</title>
        <authorList>
            <person name="Boonburapong B."/>
            <person name="Buaboocha T."/>
        </authorList>
    </citation>
    <scope>GENE FAMILY</scope>
    <scope>NOMENCLATURE</scope>
</reference>
<protein>
    <recommendedName>
        <fullName>Putative calmodulin-like protein 6</fullName>
    </recommendedName>
</protein>
<feature type="chain" id="PRO_0000338421" description="Putative calmodulin-like protein 6">
    <location>
        <begin position="1"/>
        <end position="170"/>
    </location>
</feature>
<feature type="domain" description="EF-hand 1" evidence="2">
    <location>
        <begin position="8"/>
        <end position="43"/>
    </location>
</feature>
<feature type="domain" description="EF-hand 2" evidence="2">
    <location>
        <begin position="44"/>
        <end position="79"/>
    </location>
</feature>
<feature type="domain" description="EF-hand 3" evidence="2">
    <location>
        <begin position="84"/>
        <end position="119"/>
    </location>
</feature>
<feature type="domain" description="EF-hand 4" evidence="2">
    <location>
        <begin position="120"/>
        <end position="155"/>
    </location>
</feature>
<feature type="binding site" evidence="2">
    <location>
        <position position="21"/>
    </location>
    <ligand>
        <name>Ca(2+)</name>
        <dbReference type="ChEBI" id="CHEBI:29108"/>
        <label>1</label>
    </ligand>
</feature>
<feature type="binding site" evidence="2">
    <location>
        <position position="23"/>
    </location>
    <ligand>
        <name>Ca(2+)</name>
        <dbReference type="ChEBI" id="CHEBI:29108"/>
        <label>1</label>
    </ligand>
</feature>
<feature type="binding site" evidence="2">
    <location>
        <position position="25"/>
    </location>
    <ligand>
        <name>Ca(2+)</name>
        <dbReference type="ChEBI" id="CHEBI:29108"/>
        <label>1</label>
    </ligand>
</feature>
<feature type="binding site" evidence="2">
    <location>
        <position position="27"/>
    </location>
    <ligand>
        <name>Ca(2+)</name>
        <dbReference type="ChEBI" id="CHEBI:29108"/>
        <label>1</label>
    </ligand>
</feature>
<feature type="binding site" evidence="2">
    <location>
        <position position="32"/>
    </location>
    <ligand>
        <name>Ca(2+)</name>
        <dbReference type="ChEBI" id="CHEBI:29108"/>
        <label>1</label>
    </ligand>
</feature>
<feature type="binding site" evidence="2">
    <location>
        <position position="57"/>
    </location>
    <ligand>
        <name>Ca(2+)</name>
        <dbReference type="ChEBI" id="CHEBI:29108"/>
        <label>2</label>
    </ligand>
</feature>
<feature type="binding site" evidence="2">
    <location>
        <position position="59"/>
    </location>
    <ligand>
        <name>Ca(2+)</name>
        <dbReference type="ChEBI" id="CHEBI:29108"/>
        <label>2</label>
    </ligand>
</feature>
<feature type="binding site" evidence="2">
    <location>
        <position position="61"/>
    </location>
    <ligand>
        <name>Ca(2+)</name>
        <dbReference type="ChEBI" id="CHEBI:29108"/>
        <label>2</label>
    </ligand>
</feature>
<feature type="binding site" evidence="2">
    <location>
        <position position="63"/>
    </location>
    <ligand>
        <name>Ca(2+)</name>
        <dbReference type="ChEBI" id="CHEBI:29108"/>
        <label>2</label>
    </ligand>
</feature>
<feature type="binding site" evidence="2">
    <location>
        <position position="68"/>
    </location>
    <ligand>
        <name>Ca(2+)</name>
        <dbReference type="ChEBI" id="CHEBI:29108"/>
        <label>2</label>
    </ligand>
</feature>
<feature type="binding site" evidence="2">
    <location>
        <position position="97"/>
    </location>
    <ligand>
        <name>Ca(2+)</name>
        <dbReference type="ChEBI" id="CHEBI:29108"/>
        <label>3</label>
    </ligand>
</feature>
<feature type="binding site" evidence="2">
    <location>
        <position position="99"/>
    </location>
    <ligand>
        <name>Ca(2+)</name>
        <dbReference type="ChEBI" id="CHEBI:29108"/>
        <label>3</label>
    </ligand>
</feature>
<feature type="binding site" evidence="2">
    <location>
        <position position="101"/>
    </location>
    <ligand>
        <name>Ca(2+)</name>
        <dbReference type="ChEBI" id="CHEBI:29108"/>
        <label>3</label>
    </ligand>
</feature>
<feature type="binding site" evidence="2">
    <location>
        <position position="108"/>
    </location>
    <ligand>
        <name>Ca(2+)</name>
        <dbReference type="ChEBI" id="CHEBI:29108"/>
        <label>3</label>
    </ligand>
</feature>
<feature type="binding site" evidence="2">
    <location>
        <position position="133"/>
    </location>
    <ligand>
        <name>Ca(2+)</name>
        <dbReference type="ChEBI" id="CHEBI:29108"/>
        <label>4</label>
    </ligand>
</feature>
<feature type="binding site" evidence="2">
    <location>
        <position position="135"/>
    </location>
    <ligand>
        <name>Ca(2+)</name>
        <dbReference type="ChEBI" id="CHEBI:29108"/>
        <label>4</label>
    </ligand>
</feature>
<feature type="binding site" evidence="2">
    <location>
        <position position="137"/>
    </location>
    <ligand>
        <name>Ca(2+)</name>
        <dbReference type="ChEBI" id="CHEBI:29108"/>
        <label>4</label>
    </ligand>
</feature>
<feature type="binding site" evidence="2">
    <location>
        <position position="139"/>
    </location>
    <ligand>
        <name>Ca(2+)</name>
        <dbReference type="ChEBI" id="CHEBI:29108"/>
        <label>4</label>
    </ligand>
</feature>
<feature type="binding site" evidence="2">
    <location>
        <position position="144"/>
    </location>
    <ligand>
        <name>Ca(2+)</name>
        <dbReference type="ChEBI" id="CHEBI:29108"/>
        <label>4</label>
    </ligand>
</feature>
<sequence length="170" mass="19762">MESHLNEQQISDFRDAFSLFDKNNDGCISREELATVLTRLGMAPSQEDLQDMIVAVDEDGNGTIEFDEFLAIMKKKLYENDKGDDEEELRKAFRIFDKDDNGFISRNELSMVMASLGEEMTEDEIDDMMKAADSNNDGQVDYEEFKRVMMSTWNITEIFKPHVTIWRYKP</sequence>
<accession>Q2R1Z5</accession>
<evidence type="ECO:0000250" key="1"/>
<evidence type="ECO:0000255" key="2">
    <source>
        <dbReference type="PROSITE-ProRule" id="PRU00448"/>
    </source>
</evidence>
<evidence type="ECO:0000305" key="3"/>
<organism>
    <name type="scientific">Oryza sativa subsp. japonica</name>
    <name type="common">Rice</name>
    <dbReference type="NCBI Taxonomy" id="39947"/>
    <lineage>
        <taxon>Eukaryota</taxon>
        <taxon>Viridiplantae</taxon>
        <taxon>Streptophyta</taxon>
        <taxon>Embryophyta</taxon>
        <taxon>Tracheophyta</taxon>
        <taxon>Spermatophyta</taxon>
        <taxon>Magnoliopsida</taxon>
        <taxon>Liliopsida</taxon>
        <taxon>Poales</taxon>
        <taxon>Poaceae</taxon>
        <taxon>BOP clade</taxon>
        <taxon>Oryzoideae</taxon>
        <taxon>Oryzeae</taxon>
        <taxon>Oryzinae</taxon>
        <taxon>Oryza</taxon>
        <taxon>Oryza sativa</taxon>
    </lineage>
</organism>
<dbReference type="EMBL" id="DP000010">
    <property type="protein sequence ID" value="ABA94450.1"/>
    <property type="molecule type" value="Genomic_DNA"/>
</dbReference>
<dbReference type="EMBL" id="AP008217">
    <property type="status" value="NOT_ANNOTATED_CDS"/>
    <property type="molecule type" value="Genomic_DNA"/>
</dbReference>
<dbReference type="EMBL" id="AP014967">
    <property type="status" value="NOT_ANNOTATED_CDS"/>
    <property type="molecule type" value="Genomic_DNA"/>
</dbReference>
<dbReference type="EMBL" id="CM000148">
    <property type="status" value="NOT_ANNOTATED_CDS"/>
    <property type="molecule type" value="Genomic_DNA"/>
</dbReference>
<dbReference type="SMR" id="Q2R1Z5"/>
<dbReference type="STRING" id="39947.Q2R1Z5"/>
<dbReference type="PaxDb" id="39947-Q2R1Z5"/>
<dbReference type="eggNOG" id="KOG0027">
    <property type="taxonomic scope" value="Eukaryota"/>
</dbReference>
<dbReference type="HOGENOM" id="CLU_061288_2_0_1"/>
<dbReference type="InParanoid" id="Q2R1Z5"/>
<dbReference type="Proteomes" id="UP000000763">
    <property type="component" value="Chromosome 11"/>
</dbReference>
<dbReference type="Proteomes" id="UP000007752">
    <property type="component" value="Chromosome 11"/>
</dbReference>
<dbReference type="Proteomes" id="UP000059680">
    <property type="component" value="Chromosome 11"/>
</dbReference>
<dbReference type="GO" id="GO:0005737">
    <property type="term" value="C:cytoplasm"/>
    <property type="evidence" value="ECO:0000318"/>
    <property type="project" value="GO_Central"/>
</dbReference>
<dbReference type="GO" id="GO:0005509">
    <property type="term" value="F:calcium ion binding"/>
    <property type="evidence" value="ECO:0000318"/>
    <property type="project" value="GO_Central"/>
</dbReference>
<dbReference type="GO" id="GO:0030234">
    <property type="term" value="F:enzyme regulator activity"/>
    <property type="evidence" value="ECO:0000318"/>
    <property type="project" value="GO_Central"/>
</dbReference>
<dbReference type="CDD" id="cd00051">
    <property type="entry name" value="EFh"/>
    <property type="match status" value="2"/>
</dbReference>
<dbReference type="FunFam" id="1.10.238.10:FF:000181">
    <property type="entry name" value="CALML5 isoform 1"/>
    <property type="match status" value="1"/>
</dbReference>
<dbReference type="FunFam" id="1.10.238.10:FF:000419">
    <property type="entry name" value="Calmodulin-like protein 10"/>
    <property type="match status" value="1"/>
</dbReference>
<dbReference type="Gene3D" id="1.10.238.10">
    <property type="entry name" value="EF-hand"/>
    <property type="match status" value="2"/>
</dbReference>
<dbReference type="InterPro" id="IPR050230">
    <property type="entry name" value="CALM/Myosin/TropC-like"/>
</dbReference>
<dbReference type="InterPro" id="IPR011992">
    <property type="entry name" value="EF-hand-dom_pair"/>
</dbReference>
<dbReference type="InterPro" id="IPR018247">
    <property type="entry name" value="EF_Hand_1_Ca_BS"/>
</dbReference>
<dbReference type="InterPro" id="IPR002048">
    <property type="entry name" value="EF_hand_dom"/>
</dbReference>
<dbReference type="PANTHER" id="PTHR23048:SF0">
    <property type="entry name" value="CALMODULIN LIKE 3"/>
    <property type="match status" value="1"/>
</dbReference>
<dbReference type="PANTHER" id="PTHR23048">
    <property type="entry name" value="MYOSIN LIGHT CHAIN 1, 3"/>
    <property type="match status" value="1"/>
</dbReference>
<dbReference type="Pfam" id="PF13499">
    <property type="entry name" value="EF-hand_7"/>
    <property type="match status" value="2"/>
</dbReference>
<dbReference type="SMART" id="SM00054">
    <property type="entry name" value="EFh"/>
    <property type="match status" value="4"/>
</dbReference>
<dbReference type="SUPFAM" id="SSF47473">
    <property type="entry name" value="EF-hand"/>
    <property type="match status" value="1"/>
</dbReference>
<dbReference type="PROSITE" id="PS00018">
    <property type="entry name" value="EF_HAND_1"/>
    <property type="match status" value="4"/>
</dbReference>
<dbReference type="PROSITE" id="PS50222">
    <property type="entry name" value="EF_HAND_2"/>
    <property type="match status" value="4"/>
</dbReference>
<name>CML6_ORYSJ</name>
<keyword id="KW-0106">Calcium</keyword>
<keyword id="KW-0479">Metal-binding</keyword>
<keyword id="KW-1185">Reference proteome</keyword>
<keyword id="KW-0677">Repeat</keyword>